<protein>
    <recommendedName>
        <fullName evidence="1">Small ribosomal subunit protein bS18</fullName>
    </recommendedName>
    <alternativeName>
        <fullName evidence="2">30S ribosomal protein S18</fullName>
    </alternativeName>
</protein>
<name>RS18_PSEPW</name>
<comment type="function">
    <text evidence="1">Binds as a heterodimer with protein bS6 to the central domain of the 16S rRNA, where it helps stabilize the platform of the 30S subunit.</text>
</comment>
<comment type="subunit">
    <text evidence="1">Part of the 30S ribosomal subunit. Forms a tight heterodimer with protein bS6.</text>
</comment>
<comment type="similarity">
    <text evidence="1">Belongs to the bacterial ribosomal protein bS18 family.</text>
</comment>
<sequence>MARFFRRRKFCRFTAEDVKEIDFKDLNTLKAYVSETGKIVPSRITGTKARYQRQLATAIKRARFLALLPYTDSHGR</sequence>
<evidence type="ECO:0000255" key="1">
    <source>
        <dbReference type="HAMAP-Rule" id="MF_00270"/>
    </source>
</evidence>
<evidence type="ECO:0000305" key="2"/>
<keyword id="KW-0687">Ribonucleoprotein</keyword>
<keyword id="KW-0689">Ribosomal protein</keyword>
<keyword id="KW-0694">RNA-binding</keyword>
<keyword id="KW-0699">rRNA-binding</keyword>
<organism>
    <name type="scientific">Pseudomonas putida (strain W619)</name>
    <dbReference type="NCBI Taxonomy" id="390235"/>
    <lineage>
        <taxon>Bacteria</taxon>
        <taxon>Pseudomonadati</taxon>
        <taxon>Pseudomonadota</taxon>
        <taxon>Gammaproteobacteria</taxon>
        <taxon>Pseudomonadales</taxon>
        <taxon>Pseudomonadaceae</taxon>
        <taxon>Pseudomonas</taxon>
    </lineage>
</organism>
<feature type="chain" id="PRO_1000114439" description="Small ribosomal subunit protein bS18">
    <location>
        <begin position="1"/>
        <end position="76"/>
    </location>
</feature>
<dbReference type="EMBL" id="CP000949">
    <property type="protein sequence ID" value="ACA75147.1"/>
    <property type="molecule type" value="Genomic_DNA"/>
</dbReference>
<dbReference type="SMR" id="B1JAH0"/>
<dbReference type="STRING" id="390235.PputW619_4667"/>
<dbReference type="KEGG" id="ppw:PputW619_4667"/>
<dbReference type="eggNOG" id="COG0238">
    <property type="taxonomic scope" value="Bacteria"/>
</dbReference>
<dbReference type="HOGENOM" id="CLU_148710_2_3_6"/>
<dbReference type="OrthoDB" id="9812008at2"/>
<dbReference type="GO" id="GO:0022627">
    <property type="term" value="C:cytosolic small ribosomal subunit"/>
    <property type="evidence" value="ECO:0007669"/>
    <property type="project" value="TreeGrafter"/>
</dbReference>
<dbReference type="GO" id="GO:0070181">
    <property type="term" value="F:small ribosomal subunit rRNA binding"/>
    <property type="evidence" value="ECO:0007669"/>
    <property type="project" value="TreeGrafter"/>
</dbReference>
<dbReference type="GO" id="GO:0003735">
    <property type="term" value="F:structural constituent of ribosome"/>
    <property type="evidence" value="ECO:0007669"/>
    <property type="project" value="InterPro"/>
</dbReference>
<dbReference type="GO" id="GO:0006412">
    <property type="term" value="P:translation"/>
    <property type="evidence" value="ECO:0007669"/>
    <property type="project" value="UniProtKB-UniRule"/>
</dbReference>
<dbReference type="FunFam" id="4.10.640.10:FF:000001">
    <property type="entry name" value="30S ribosomal protein S18"/>
    <property type="match status" value="1"/>
</dbReference>
<dbReference type="Gene3D" id="4.10.640.10">
    <property type="entry name" value="Ribosomal protein S18"/>
    <property type="match status" value="1"/>
</dbReference>
<dbReference type="HAMAP" id="MF_00270">
    <property type="entry name" value="Ribosomal_bS18"/>
    <property type="match status" value="1"/>
</dbReference>
<dbReference type="InterPro" id="IPR001648">
    <property type="entry name" value="Ribosomal_bS18"/>
</dbReference>
<dbReference type="InterPro" id="IPR018275">
    <property type="entry name" value="Ribosomal_bS18_CS"/>
</dbReference>
<dbReference type="InterPro" id="IPR036870">
    <property type="entry name" value="Ribosomal_bS18_sf"/>
</dbReference>
<dbReference type="NCBIfam" id="TIGR00165">
    <property type="entry name" value="S18"/>
    <property type="match status" value="1"/>
</dbReference>
<dbReference type="PANTHER" id="PTHR13479">
    <property type="entry name" value="30S RIBOSOMAL PROTEIN S18"/>
    <property type="match status" value="1"/>
</dbReference>
<dbReference type="PANTHER" id="PTHR13479:SF40">
    <property type="entry name" value="SMALL RIBOSOMAL SUBUNIT PROTEIN BS18M"/>
    <property type="match status" value="1"/>
</dbReference>
<dbReference type="Pfam" id="PF01084">
    <property type="entry name" value="Ribosomal_S18"/>
    <property type="match status" value="1"/>
</dbReference>
<dbReference type="PRINTS" id="PR00974">
    <property type="entry name" value="RIBOSOMALS18"/>
</dbReference>
<dbReference type="SUPFAM" id="SSF46911">
    <property type="entry name" value="Ribosomal protein S18"/>
    <property type="match status" value="1"/>
</dbReference>
<dbReference type="PROSITE" id="PS00057">
    <property type="entry name" value="RIBOSOMAL_S18"/>
    <property type="match status" value="1"/>
</dbReference>
<gene>
    <name evidence="1" type="primary">rpsR</name>
    <name type="ordered locus">PputW619_4667</name>
</gene>
<reference key="1">
    <citation type="submission" date="2008-02" db="EMBL/GenBank/DDBJ databases">
        <title>Complete sequence of Pseudomonas putida W619.</title>
        <authorList>
            <person name="Copeland A."/>
            <person name="Lucas S."/>
            <person name="Lapidus A."/>
            <person name="Barry K."/>
            <person name="Detter J.C."/>
            <person name="Glavina del Rio T."/>
            <person name="Dalin E."/>
            <person name="Tice H."/>
            <person name="Pitluck S."/>
            <person name="Chain P."/>
            <person name="Malfatti S."/>
            <person name="Shin M."/>
            <person name="Vergez L."/>
            <person name="Schmutz J."/>
            <person name="Larimer F."/>
            <person name="Land M."/>
            <person name="Hauser L."/>
            <person name="Kyrpides N."/>
            <person name="Kim E."/>
            <person name="Taghavi S."/>
            <person name="Vangronsveld D."/>
            <person name="van der Lelie D."/>
            <person name="Richardson P."/>
        </authorList>
    </citation>
    <scope>NUCLEOTIDE SEQUENCE [LARGE SCALE GENOMIC DNA]</scope>
    <source>
        <strain>W619</strain>
    </source>
</reference>
<proteinExistence type="inferred from homology"/>
<accession>B1JAH0</accession>